<organism>
    <name type="scientific">Streptococcus pneumoniae (strain ATCC 700669 / Spain 23F-1)</name>
    <dbReference type="NCBI Taxonomy" id="561276"/>
    <lineage>
        <taxon>Bacteria</taxon>
        <taxon>Bacillati</taxon>
        <taxon>Bacillota</taxon>
        <taxon>Bacilli</taxon>
        <taxon>Lactobacillales</taxon>
        <taxon>Streptococcaceae</taxon>
        <taxon>Streptococcus</taxon>
    </lineage>
</organism>
<proteinExistence type="inferred from homology"/>
<name>SYGB_STRPJ</name>
<reference key="1">
    <citation type="journal article" date="2009" name="J. Bacteriol.">
        <title>Role of conjugative elements in the evolution of the multidrug-resistant pandemic clone Streptococcus pneumoniae Spain23F ST81.</title>
        <authorList>
            <person name="Croucher N.J."/>
            <person name="Walker D."/>
            <person name="Romero P."/>
            <person name="Lennard N."/>
            <person name="Paterson G.K."/>
            <person name="Bason N.C."/>
            <person name="Mitchell A.M."/>
            <person name="Quail M.A."/>
            <person name="Andrew P.W."/>
            <person name="Parkhill J."/>
            <person name="Bentley S.D."/>
            <person name="Mitchell T.J."/>
        </authorList>
    </citation>
    <scope>NUCLEOTIDE SEQUENCE [LARGE SCALE GENOMIC DNA]</scope>
    <source>
        <strain>ATCC 700669 / Spain 23F-1</strain>
    </source>
</reference>
<evidence type="ECO:0000255" key="1">
    <source>
        <dbReference type="HAMAP-Rule" id="MF_00255"/>
    </source>
</evidence>
<feature type="chain" id="PRO_1000197219" description="Glycine--tRNA ligase beta subunit">
    <location>
        <begin position="1"/>
        <end position="678"/>
    </location>
</feature>
<gene>
    <name evidence="1" type="primary">glyS</name>
    <name type="ordered locus">SPN23F14390</name>
</gene>
<keyword id="KW-0030">Aminoacyl-tRNA synthetase</keyword>
<keyword id="KW-0067">ATP-binding</keyword>
<keyword id="KW-0963">Cytoplasm</keyword>
<keyword id="KW-0436">Ligase</keyword>
<keyword id="KW-0547">Nucleotide-binding</keyword>
<keyword id="KW-0648">Protein biosynthesis</keyword>
<protein>
    <recommendedName>
        <fullName evidence="1">Glycine--tRNA ligase beta subunit</fullName>
        <ecNumber evidence="1">6.1.1.14</ecNumber>
    </recommendedName>
    <alternativeName>
        <fullName evidence="1">Glycyl-tRNA synthetase beta subunit</fullName>
        <shortName evidence="1">GlyRS</shortName>
    </alternativeName>
</protein>
<accession>B8ZL20</accession>
<comment type="catalytic activity">
    <reaction evidence="1">
        <text>tRNA(Gly) + glycine + ATP = glycyl-tRNA(Gly) + AMP + diphosphate</text>
        <dbReference type="Rhea" id="RHEA:16013"/>
        <dbReference type="Rhea" id="RHEA-COMP:9664"/>
        <dbReference type="Rhea" id="RHEA-COMP:9683"/>
        <dbReference type="ChEBI" id="CHEBI:30616"/>
        <dbReference type="ChEBI" id="CHEBI:33019"/>
        <dbReference type="ChEBI" id="CHEBI:57305"/>
        <dbReference type="ChEBI" id="CHEBI:78442"/>
        <dbReference type="ChEBI" id="CHEBI:78522"/>
        <dbReference type="ChEBI" id="CHEBI:456215"/>
        <dbReference type="EC" id="6.1.1.14"/>
    </reaction>
</comment>
<comment type="subunit">
    <text evidence="1">Tetramer of two alpha and two beta subunits.</text>
</comment>
<comment type="subcellular location">
    <subcellularLocation>
        <location evidence="1">Cytoplasm</location>
    </subcellularLocation>
</comment>
<comment type="similarity">
    <text evidence="1">Belongs to the class-II aminoacyl-tRNA synthetase family.</text>
</comment>
<sequence>MTKNLLVELGLEELPAYVVTPSEKQLGEKMAAFLKGKRLSFEAIQTFSTPRRLAVRVTGLADKQSDLTEDFKGPAKKIALDSDGNFTKAAQGFVRGKGLTVEDIEFREIKGEEYVYVTKEEIGQAVEAIVPGIVDVLKSLTFPVSMHWAGNSFEYIRPVHTLTVLLDEQEFDLDFLDIKGSRVSRGHRFLGQETKIQSALSYEEDLRKQFVIADPCEREQMIVDQIKEIEAKHGVRIEIDADLLNEVLNLVEYPTAFMGSFDAKYLEVPEEVLVTSMKEHQRYFVVRDQDGKLLPNFISVRNGNAERLKNVIKGNEKVLVARLEDGEFFWREDQKLVISDLVEKLNNVTFHEKIGSLREHMIRTGQITVLLAEKASLSVDETVDLARAAAIYKFDLLTGMVGEFDELQGIMGEKYTLLAGETPAVAAAIREHYMPTSAEGELPESKVGAVLAIADKLDTILSFFSVGLIPSGSNDPYALRRATQGVVRILDAFGWHIAMDELIDSLYALKFDSLTYENKAEVMDFIKARVDKMMGSTPKDIKEAVLAGSNFVVADMLEAASALVEVSKEEDFKPSVESLSRAFNLAEKAEGVATVDSALFENDQEKALAEAVETLILSGPASQQLKQLFALSPVIDAFFENTMVMAEDQAVRQNRLAILSQLTKKAAKFACFNQINTK</sequence>
<dbReference type="EC" id="6.1.1.14" evidence="1"/>
<dbReference type="EMBL" id="FM211187">
    <property type="protein sequence ID" value="CAR69229.1"/>
    <property type="molecule type" value="Genomic_DNA"/>
</dbReference>
<dbReference type="RefSeq" id="WP_000164779.1">
    <property type="nucleotide sequence ID" value="NC_011900.1"/>
</dbReference>
<dbReference type="SMR" id="B8ZL20"/>
<dbReference type="KEGG" id="sne:SPN23F14390"/>
<dbReference type="HOGENOM" id="CLU_007220_2_2_9"/>
<dbReference type="GO" id="GO:0005829">
    <property type="term" value="C:cytosol"/>
    <property type="evidence" value="ECO:0007669"/>
    <property type="project" value="TreeGrafter"/>
</dbReference>
<dbReference type="GO" id="GO:0004814">
    <property type="term" value="F:arginine-tRNA ligase activity"/>
    <property type="evidence" value="ECO:0007669"/>
    <property type="project" value="InterPro"/>
</dbReference>
<dbReference type="GO" id="GO:0005524">
    <property type="term" value="F:ATP binding"/>
    <property type="evidence" value="ECO:0007669"/>
    <property type="project" value="UniProtKB-UniRule"/>
</dbReference>
<dbReference type="GO" id="GO:0004820">
    <property type="term" value="F:glycine-tRNA ligase activity"/>
    <property type="evidence" value="ECO:0007669"/>
    <property type="project" value="UniProtKB-UniRule"/>
</dbReference>
<dbReference type="GO" id="GO:0006420">
    <property type="term" value="P:arginyl-tRNA aminoacylation"/>
    <property type="evidence" value="ECO:0007669"/>
    <property type="project" value="InterPro"/>
</dbReference>
<dbReference type="GO" id="GO:0006426">
    <property type="term" value="P:glycyl-tRNA aminoacylation"/>
    <property type="evidence" value="ECO:0007669"/>
    <property type="project" value="UniProtKB-UniRule"/>
</dbReference>
<dbReference type="HAMAP" id="MF_00255">
    <property type="entry name" value="Gly_tRNA_synth_beta"/>
    <property type="match status" value="1"/>
</dbReference>
<dbReference type="InterPro" id="IPR008909">
    <property type="entry name" value="DALR_anticod-bd"/>
</dbReference>
<dbReference type="InterPro" id="IPR015944">
    <property type="entry name" value="Gly-tRNA-synth_bsu"/>
</dbReference>
<dbReference type="InterPro" id="IPR006194">
    <property type="entry name" value="Gly-tRNA-synth_heterodimer"/>
</dbReference>
<dbReference type="NCBIfam" id="TIGR00211">
    <property type="entry name" value="glyS"/>
    <property type="match status" value="1"/>
</dbReference>
<dbReference type="PANTHER" id="PTHR30075:SF2">
    <property type="entry name" value="GLYCINE--TRNA LIGASE, CHLOROPLASTIC_MITOCHONDRIAL 2"/>
    <property type="match status" value="1"/>
</dbReference>
<dbReference type="PANTHER" id="PTHR30075">
    <property type="entry name" value="GLYCYL-TRNA SYNTHETASE"/>
    <property type="match status" value="1"/>
</dbReference>
<dbReference type="Pfam" id="PF05746">
    <property type="entry name" value="DALR_1"/>
    <property type="match status" value="1"/>
</dbReference>
<dbReference type="Pfam" id="PF02092">
    <property type="entry name" value="tRNA_synt_2f"/>
    <property type="match status" value="1"/>
</dbReference>
<dbReference type="PRINTS" id="PR01045">
    <property type="entry name" value="TRNASYNTHGB"/>
</dbReference>
<dbReference type="SUPFAM" id="SSF109604">
    <property type="entry name" value="HD-domain/PDEase-like"/>
    <property type="match status" value="1"/>
</dbReference>
<dbReference type="PROSITE" id="PS50861">
    <property type="entry name" value="AA_TRNA_LIGASE_II_GLYAB"/>
    <property type="match status" value="1"/>
</dbReference>